<evidence type="ECO:0000250" key="1"/>
<evidence type="ECO:0000250" key="2">
    <source>
        <dbReference type="UniProtKB" id="P07550"/>
    </source>
</evidence>
<evidence type="ECO:0000255" key="3"/>
<evidence type="ECO:0000255" key="4">
    <source>
        <dbReference type="PROSITE-ProRule" id="PRU00521"/>
    </source>
</evidence>
<evidence type="ECO:0000256" key="5">
    <source>
        <dbReference type="SAM" id="MobiDB-lite"/>
    </source>
</evidence>
<evidence type="ECO:0000269" key="6">
    <source>
    </source>
</evidence>
<evidence type="ECO:0000305" key="7"/>
<accession>Q28509</accession>
<gene>
    <name type="primary">ADRB2</name>
    <name type="synonym">B2AR</name>
</gene>
<sequence length="415" mass="46472">MGQPGNGSAFLLAPNGSHAPDHDVTQERDEAWVVGMGIVMSLIVLAIVFGNVLVITAIAKFERLQTVTNYFITSLACADLVMGLAVVPFGAAHILMKMWTFGNFWCEFWTSIDVLCVTASIETLCVIAVDRYFAITSPFKYQSLLTKNKARVIILMVWIVSGLTSFLPIQMHWYRATHQEAINCYAKETCCDFFTNQAYAIASSIVSFYVPLVIMVFVYSRVFQEAKRQLQKIDKSEGRFHAQNLSQVEQDGRTGHGLRRSSKFCLKEHKALKTLGIIMGTFTLCWLPFFIVNIVHVIQDNLIPKEVYILLNWVGYVNSGFNPLIYCRSPDFRIAFQELLCLRRSSLKACGNGYSSNSNGNTGEQSGYHLEQEKENKLLCEDLPGTEDFVGHQGTVPSDNIDSQGRSCSTNDSLL</sequence>
<dbReference type="EMBL" id="L38905">
    <property type="protein sequence ID" value="AAC41914.1"/>
    <property type="molecule type" value="mRNA"/>
</dbReference>
<dbReference type="PIR" id="I53040">
    <property type="entry name" value="I53040"/>
</dbReference>
<dbReference type="RefSeq" id="NP_001036239.1">
    <property type="nucleotide sequence ID" value="NM_001042774.1"/>
</dbReference>
<dbReference type="SMR" id="Q28509"/>
<dbReference type="FunCoup" id="Q28509">
    <property type="interactions" value="1106"/>
</dbReference>
<dbReference type="STRING" id="9544.ENSMMUP00000002958"/>
<dbReference type="GlyCosmos" id="Q28509">
    <property type="glycosylation" value="2 sites, No reported glycans"/>
</dbReference>
<dbReference type="PaxDb" id="9544-ENSMMUP00000002958"/>
<dbReference type="Ensembl" id="ENSMMUT00000003133.4">
    <property type="protein sequence ID" value="ENSMMUP00000002958.2"/>
    <property type="gene ID" value="ENSMMUG00000002214.4"/>
</dbReference>
<dbReference type="GeneID" id="710146"/>
<dbReference type="KEGG" id="mcc:710146"/>
<dbReference type="CTD" id="154"/>
<dbReference type="VEuPathDB" id="HostDB:ENSMMUG00000002214"/>
<dbReference type="VGNC" id="VGNC:69730">
    <property type="gene designation" value="ADRB2"/>
</dbReference>
<dbReference type="eggNOG" id="KOG3656">
    <property type="taxonomic scope" value="Eukaryota"/>
</dbReference>
<dbReference type="GeneTree" id="ENSGT00940000159538"/>
<dbReference type="HOGENOM" id="CLU_009579_11_0_1"/>
<dbReference type="InParanoid" id="Q28509"/>
<dbReference type="OMA" id="CEFWISI"/>
<dbReference type="OrthoDB" id="5975661at2759"/>
<dbReference type="TreeFam" id="TF316350"/>
<dbReference type="Proteomes" id="UP000006718">
    <property type="component" value="Chromosome 6"/>
</dbReference>
<dbReference type="Bgee" id="ENSMMUG00000002214">
    <property type="expression patterns" value="Expressed in adipose tissue and 18 other cell types or tissues"/>
</dbReference>
<dbReference type="ExpressionAtlas" id="Q28509">
    <property type="expression patterns" value="baseline"/>
</dbReference>
<dbReference type="GO" id="GO:0016324">
    <property type="term" value="C:apical plasma membrane"/>
    <property type="evidence" value="ECO:0007669"/>
    <property type="project" value="Ensembl"/>
</dbReference>
<dbReference type="GO" id="GO:0036064">
    <property type="term" value="C:ciliary basal body"/>
    <property type="evidence" value="ECO:0007669"/>
    <property type="project" value="Ensembl"/>
</dbReference>
<dbReference type="GO" id="GO:0005769">
    <property type="term" value="C:early endosome"/>
    <property type="evidence" value="ECO:0007669"/>
    <property type="project" value="UniProtKB-SubCell"/>
</dbReference>
<dbReference type="GO" id="GO:0005794">
    <property type="term" value="C:Golgi apparatus"/>
    <property type="evidence" value="ECO:0007669"/>
    <property type="project" value="UniProtKB-SubCell"/>
</dbReference>
<dbReference type="GO" id="GO:0045171">
    <property type="term" value="C:intercellular bridge"/>
    <property type="evidence" value="ECO:0007669"/>
    <property type="project" value="Ensembl"/>
</dbReference>
<dbReference type="GO" id="GO:0072686">
    <property type="term" value="C:mitotic spindle"/>
    <property type="evidence" value="ECO:0007669"/>
    <property type="project" value="Ensembl"/>
</dbReference>
<dbReference type="GO" id="GO:0098992">
    <property type="term" value="C:neuronal dense core vesicle"/>
    <property type="evidence" value="ECO:0007669"/>
    <property type="project" value="Ensembl"/>
</dbReference>
<dbReference type="GO" id="GO:0005634">
    <property type="term" value="C:nucleus"/>
    <property type="evidence" value="ECO:0007669"/>
    <property type="project" value="Ensembl"/>
</dbReference>
<dbReference type="GO" id="GO:0005886">
    <property type="term" value="C:plasma membrane"/>
    <property type="evidence" value="ECO:0000318"/>
    <property type="project" value="GO_Central"/>
</dbReference>
<dbReference type="GO" id="GO:0043235">
    <property type="term" value="C:receptor complex"/>
    <property type="evidence" value="ECO:0007669"/>
    <property type="project" value="Ensembl"/>
</dbReference>
<dbReference type="GO" id="GO:0008179">
    <property type="term" value="F:adenylate cyclase binding"/>
    <property type="evidence" value="ECO:0007669"/>
    <property type="project" value="Ensembl"/>
</dbReference>
<dbReference type="GO" id="GO:0001540">
    <property type="term" value="F:amyloid-beta binding"/>
    <property type="evidence" value="ECO:0007669"/>
    <property type="project" value="Ensembl"/>
</dbReference>
<dbReference type="GO" id="GO:0004941">
    <property type="term" value="F:beta2-adrenergic receptor activity"/>
    <property type="evidence" value="ECO:0000318"/>
    <property type="project" value="GO_Central"/>
</dbReference>
<dbReference type="GO" id="GO:0051380">
    <property type="term" value="F:norepinephrine binding"/>
    <property type="evidence" value="ECO:0000318"/>
    <property type="project" value="GO_Central"/>
</dbReference>
<dbReference type="GO" id="GO:0015459">
    <property type="term" value="F:potassium channel regulator activity"/>
    <property type="evidence" value="ECO:0007669"/>
    <property type="project" value="Ensembl"/>
</dbReference>
<dbReference type="GO" id="GO:0042803">
    <property type="term" value="F:protein homodimerization activity"/>
    <property type="evidence" value="ECO:0007669"/>
    <property type="project" value="Ensembl"/>
</dbReference>
<dbReference type="GO" id="GO:0044877">
    <property type="term" value="F:protein-containing complex binding"/>
    <property type="evidence" value="ECO:0007669"/>
    <property type="project" value="Ensembl"/>
</dbReference>
<dbReference type="GO" id="GO:0071880">
    <property type="term" value="P:adenylate cyclase-activating adrenergic receptor signaling pathway"/>
    <property type="evidence" value="ECO:0000318"/>
    <property type="project" value="GO_Central"/>
</dbReference>
<dbReference type="GO" id="GO:0098990">
    <property type="term" value="P:AMPA selective glutamate receptor signaling pathway"/>
    <property type="evidence" value="ECO:0007669"/>
    <property type="project" value="Ensembl"/>
</dbReference>
<dbReference type="GO" id="GO:0045453">
    <property type="term" value="P:bone resorption"/>
    <property type="evidence" value="ECO:0007669"/>
    <property type="project" value="Ensembl"/>
</dbReference>
<dbReference type="GO" id="GO:0050873">
    <property type="term" value="P:brown fat cell differentiation"/>
    <property type="evidence" value="ECO:0007669"/>
    <property type="project" value="Ensembl"/>
</dbReference>
<dbReference type="GO" id="GO:1904646">
    <property type="term" value="P:cellular response to amyloid-beta"/>
    <property type="evidence" value="ECO:0007669"/>
    <property type="project" value="Ensembl"/>
</dbReference>
<dbReference type="GO" id="GO:0002024">
    <property type="term" value="P:diet induced thermogenesis"/>
    <property type="evidence" value="ECO:0007669"/>
    <property type="project" value="Ensembl"/>
</dbReference>
<dbReference type="GO" id="GO:0031649">
    <property type="term" value="P:heat generation"/>
    <property type="evidence" value="ECO:0007669"/>
    <property type="project" value="Ensembl"/>
</dbReference>
<dbReference type="GO" id="GO:0045744">
    <property type="term" value="P:negative regulation of G protein-coupled receptor signaling pathway"/>
    <property type="evidence" value="ECO:0007669"/>
    <property type="project" value="Ensembl"/>
</dbReference>
<dbReference type="GO" id="GO:0040015">
    <property type="term" value="P:negative regulation of multicellular organism growth"/>
    <property type="evidence" value="ECO:0007669"/>
    <property type="project" value="Ensembl"/>
</dbReference>
<dbReference type="GO" id="GO:0045986">
    <property type="term" value="P:negative regulation of smooth muscle contraction"/>
    <property type="evidence" value="ECO:0007669"/>
    <property type="project" value="Ensembl"/>
</dbReference>
<dbReference type="GO" id="GO:0002025">
    <property type="term" value="P:norepinephrine-epinephrine-mediated vasodilation involved in regulation of systemic arterial blood pressure"/>
    <property type="evidence" value="ECO:0000318"/>
    <property type="project" value="GO_Central"/>
</dbReference>
<dbReference type="GO" id="GO:1901098">
    <property type="term" value="P:positive regulation of autophagosome maturation"/>
    <property type="evidence" value="ECO:0000250"/>
    <property type="project" value="GO_Central"/>
</dbReference>
<dbReference type="GO" id="GO:0030501">
    <property type="term" value="P:positive regulation of bone mineralization"/>
    <property type="evidence" value="ECO:0007669"/>
    <property type="project" value="Ensembl"/>
</dbReference>
<dbReference type="GO" id="GO:0141163">
    <property type="term" value="P:positive regulation of cAMP/PKA signal transduction"/>
    <property type="evidence" value="ECO:0007669"/>
    <property type="project" value="Ensembl"/>
</dbReference>
<dbReference type="GO" id="GO:0120162">
    <property type="term" value="P:positive regulation of cold-induced thermogenesis"/>
    <property type="evidence" value="ECO:0007669"/>
    <property type="project" value="Ensembl"/>
</dbReference>
<dbReference type="GO" id="GO:1904504">
    <property type="term" value="P:positive regulation of lipophagy"/>
    <property type="evidence" value="ECO:0000250"/>
    <property type="project" value="GO_Central"/>
</dbReference>
<dbReference type="GO" id="GO:0043410">
    <property type="term" value="P:positive regulation of MAPK cascade"/>
    <property type="evidence" value="ECO:0000318"/>
    <property type="project" value="GO_Central"/>
</dbReference>
<dbReference type="GO" id="GO:0061885">
    <property type="term" value="P:positive regulation of mini excitatory postsynaptic potential"/>
    <property type="evidence" value="ECO:0007669"/>
    <property type="project" value="Ensembl"/>
</dbReference>
<dbReference type="GO" id="GO:0045944">
    <property type="term" value="P:positive regulation of transcription by RNA polymerase II"/>
    <property type="evidence" value="ECO:0007669"/>
    <property type="project" value="Ensembl"/>
</dbReference>
<dbReference type="GO" id="GO:0006898">
    <property type="term" value="P:receptor-mediated endocytosis"/>
    <property type="evidence" value="ECO:0007669"/>
    <property type="project" value="Ensembl"/>
</dbReference>
<dbReference type="GO" id="GO:0002028">
    <property type="term" value="P:regulation of sodium ion transport"/>
    <property type="evidence" value="ECO:0007669"/>
    <property type="project" value="Ensembl"/>
</dbReference>
<dbReference type="GO" id="GO:0009409">
    <property type="term" value="P:response to cold"/>
    <property type="evidence" value="ECO:0007669"/>
    <property type="project" value="Ensembl"/>
</dbReference>
<dbReference type="GO" id="GO:0006939">
    <property type="term" value="P:smooth muscle contraction"/>
    <property type="evidence" value="ECO:0007669"/>
    <property type="project" value="Ensembl"/>
</dbReference>
<dbReference type="GO" id="GO:0006366">
    <property type="term" value="P:transcription by RNA polymerase II"/>
    <property type="evidence" value="ECO:0007669"/>
    <property type="project" value="Ensembl"/>
</dbReference>
<dbReference type="CDD" id="cd15957">
    <property type="entry name" value="7tmA_Beta2_AR"/>
    <property type="match status" value="1"/>
</dbReference>
<dbReference type="FunFam" id="1.20.1070.10:FF:000057">
    <property type="entry name" value="Beta-1 adrenergic receptor"/>
    <property type="match status" value="1"/>
</dbReference>
<dbReference type="Gene3D" id="1.20.1070.10">
    <property type="entry name" value="Rhodopsin 7-helix transmembrane proteins"/>
    <property type="match status" value="1"/>
</dbReference>
<dbReference type="InterPro" id="IPR002233">
    <property type="entry name" value="ADR_fam"/>
</dbReference>
<dbReference type="InterPro" id="IPR000332">
    <property type="entry name" value="ADRB2_rcpt"/>
</dbReference>
<dbReference type="InterPro" id="IPR000276">
    <property type="entry name" value="GPCR_Rhodpsn"/>
</dbReference>
<dbReference type="InterPro" id="IPR017452">
    <property type="entry name" value="GPCR_Rhodpsn_7TM"/>
</dbReference>
<dbReference type="PANTHER" id="PTHR24248">
    <property type="entry name" value="ADRENERGIC RECEPTOR-RELATED G-PROTEIN COUPLED RECEPTOR"/>
    <property type="match status" value="1"/>
</dbReference>
<dbReference type="PANTHER" id="PTHR24248:SF21">
    <property type="entry name" value="BETA-2 ADRENERGIC RECEPTOR"/>
    <property type="match status" value="1"/>
</dbReference>
<dbReference type="Pfam" id="PF00001">
    <property type="entry name" value="7tm_1"/>
    <property type="match status" value="1"/>
</dbReference>
<dbReference type="PRINTS" id="PR01103">
    <property type="entry name" value="ADRENERGICR"/>
</dbReference>
<dbReference type="PRINTS" id="PR00562">
    <property type="entry name" value="ADRENRGCB2AR"/>
</dbReference>
<dbReference type="PRINTS" id="PR00237">
    <property type="entry name" value="GPCRRHODOPSN"/>
</dbReference>
<dbReference type="SMART" id="SM01381">
    <property type="entry name" value="7TM_GPCR_Srsx"/>
    <property type="match status" value="1"/>
</dbReference>
<dbReference type="SUPFAM" id="SSF81321">
    <property type="entry name" value="Family A G protein-coupled receptor-like"/>
    <property type="match status" value="1"/>
</dbReference>
<dbReference type="PROSITE" id="PS00237">
    <property type="entry name" value="G_PROTEIN_RECEP_F1_1"/>
    <property type="match status" value="1"/>
</dbReference>
<dbReference type="PROSITE" id="PS50262">
    <property type="entry name" value="G_PROTEIN_RECEP_F1_2"/>
    <property type="match status" value="1"/>
</dbReference>
<proteinExistence type="evidence at transcript level"/>
<feature type="chain" id="PRO_0000069131" description="Beta-2 adrenergic receptor">
    <location>
        <begin position="1"/>
        <end position="415"/>
    </location>
</feature>
<feature type="topological domain" description="Extracellular" evidence="1">
    <location>
        <begin position="1"/>
        <end position="34"/>
    </location>
</feature>
<feature type="transmembrane region" description="Helical; Name=1" evidence="1">
    <location>
        <begin position="35"/>
        <end position="58"/>
    </location>
</feature>
<feature type="topological domain" description="Cytoplasmic" evidence="1">
    <location>
        <begin position="59"/>
        <end position="71"/>
    </location>
</feature>
<feature type="transmembrane region" description="Helical; Name=2" evidence="1">
    <location>
        <begin position="72"/>
        <end position="95"/>
    </location>
</feature>
<feature type="topological domain" description="Extracellular" evidence="1">
    <location>
        <begin position="96"/>
        <end position="106"/>
    </location>
</feature>
<feature type="transmembrane region" description="Helical; Name=3" evidence="1">
    <location>
        <begin position="107"/>
        <end position="129"/>
    </location>
</feature>
<feature type="topological domain" description="Cytoplasmic" evidence="1">
    <location>
        <begin position="130"/>
        <end position="150"/>
    </location>
</feature>
<feature type="transmembrane region" description="Helical; Name=4" evidence="1">
    <location>
        <begin position="151"/>
        <end position="174"/>
    </location>
</feature>
<feature type="topological domain" description="Extracellular" evidence="1">
    <location>
        <begin position="175"/>
        <end position="196"/>
    </location>
</feature>
<feature type="transmembrane region" description="Helical; Name=5" evidence="1">
    <location>
        <begin position="197"/>
        <end position="220"/>
    </location>
</feature>
<feature type="topological domain" description="Cytoplasmic" evidence="1">
    <location>
        <begin position="221"/>
        <end position="274"/>
    </location>
</feature>
<feature type="transmembrane region" description="Helical; Name=6" evidence="1">
    <location>
        <begin position="275"/>
        <end position="298"/>
    </location>
</feature>
<feature type="topological domain" description="Extracellular" evidence="1">
    <location>
        <begin position="299"/>
        <end position="305"/>
    </location>
</feature>
<feature type="transmembrane region" description="Helical; Name=7" evidence="1">
    <location>
        <begin position="306"/>
        <end position="329"/>
    </location>
</feature>
<feature type="topological domain" description="Cytoplasmic" evidence="1">
    <location>
        <begin position="330"/>
        <end position="415"/>
    </location>
</feature>
<feature type="region of interest" description="Disordered" evidence="5">
    <location>
        <begin position="391"/>
        <end position="415"/>
    </location>
</feature>
<feature type="short sequence motif" description="PDZ-binding">
    <location>
        <begin position="412"/>
        <end position="415"/>
    </location>
</feature>
<feature type="compositionally biased region" description="Polar residues" evidence="5">
    <location>
        <begin position="395"/>
        <end position="415"/>
    </location>
</feature>
<feature type="modified residue" description="Phosphotyrosine" evidence="2">
    <location>
        <position position="141"/>
    </location>
</feature>
<feature type="modified residue" description="Phosphoserine" evidence="2">
    <location>
        <position position="246"/>
    </location>
</feature>
<feature type="modified residue" description="Phosphoserine; by PKA" evidence="3">
    <location>
        <position position="261"/>
    </location>
</feature>
<feature type="modified residue" description="Phosphoserine; by PKA" evidence="3">
    <location>
        <position position="262"/>
    </location>
</feature>
<feature type="modified residue" description="Phosphoserine; by PKA" evidence="2">
    <location>
        <position position="345"/>
    </location>
</feature>
<feature type="modified residue" description="Phosphoserine; by PKA" evidence="2">
    <location>
        <position position="346"/>
    </location>
</feature>
<feature type="modified residue" description="Phosphoserine; by BARK" evidence="7">
    <location>
        <position position="355"/>
    </location>
</feature>
<feature type="modified residue" description="Phosphoserine; by BARK" evidence="7">
    <location>
        <position position="356"/>
    </location>
</feature>
<feature type="modified residue" description="4-hydroxyproline" evidence="1">
    <location>
        <position position="384"/>
    </location>
</feature>
<feature type="modified residue" description="4-hydroxyproline" evidence="1">
    <location>
        <position position="397"/>
    </location>
</feature>
<feature type="lipid moiety-binding region" description="S-palmitoyl cysteine" evidence="2">
    <location>
        <position position="265"/>
    </location>
</feature>
<feature type="lipid moiety-binding region" description="S-palmitoyl cysteine" evidence="2">
    <location>
        <position position="341"/>
    </location>
</feature>
<feature type="glycosylation site" description="N-linked (GlcNAc...) asparagine" evidence="3">
    <location>
        <position position="6"/>
    </location>
</feature>
<feature type="glycosylation site" description="N-linked (GlcNAc...) asparagine" evidence="3">
    <location>
        <position position="15"/>
    </location>
</feature>
<feature type="disulfide bond" evidence="4">
    <location>
        <begin position="106"/>
        <end position="191"/>
    </location>
</feature>
<feature type="disulfide bond" evidence="4">
    <location>
        <begin position="184"/>
        <end position="190"/>
    </location>
</feature>
<reference key="1">
    <citation type="journal article" date="1995" name="DNA Cell Biol.">
        <title>Cloning, sequencing, and expression of the rhesus monkey beta 2 adrenergic receptor.</title>
        <authorList>
            <person name="Amend A.M."/>
            <person name="Guan X.-M."/>
        </authorList>
    </citation>
    <scope>NUCLEOTIDE SEQUENCE [MRNA]</scope>
    <scope>FUNCTION</scope>
    <scope>SUBCELLULAR LOCATION</scope>
</reference>
<comment type="function">
    <text evidence="6">Beta-adrenergic receptors mediate the catecholamine-induced activation of adenylate cyclase through the action of G proteins. The beta-2-adrenergic receptor binds epinephrine with an approximately 30-fold greater affinity than it does norepinephrine.</text>
</comment>
<comment type="subunit">
    <text evidence="2">Binds NHERF1 and GPRASP1. Interacts with ARRB1 and ARRB2. Interacts with SRC (By similarity). Interacts with USP20 and USP33 (By similarity). Interacts with VHL; the interaction, which is increased on hydroxylation of ADRB2, ubiquitinates ADRB2 leading to its degradation. Interacts with EGLN3; the interaction hydroxylates ADRB2 facilitating VHL-E3 ligase-mediated ubiquitination. Interacts (via PDZ-binding motif) with SNX27 (via PDZ domain); the interaction is required when endocytosed to prevent degradation in lysosomes and promote recycling to the plasma membrane. Interacts with CNIH4. Interacts with ARRDC3. Interacts with NEDD4 (By similarity). Interacts with MARCHF2 (By similarity).</text>
</comment>
<comment type="subcellular location">
    <subcellularLocation>
        <location evidence="2">Cell membrane</location>
        <topology evidence="2">Multi-pass membrane protein</topology>
    </subcellularLocation>
    <subcellularLocation>
        <location evidence="2">Early endosome</location>
    </subcellularLocation>
    <subcellularLocation>
        <location evidence="2">Golgi apparatus</location>
    </subcellularLocation>
    <text evidence="2">Colocalizes with VHL at the cell membrane. Activated receptors are internalized into endosomes prior to their degradation in lysosomes. Activated receptors are also detected within the Golgi apparatus.</text>
</comment>
<comment type="PTM">
    <text evidence="1">Palmitoylated; may reduce accessibility of Ser-345 and Ser-346 by anchoring Cys-341 to the plasma membrane. Agonist stimulation promotes depalmitoylation and further allows Ser-345 and Ser-346 phosphorylation (By similarity).</text>
</comment>
<comment type="PTM">
    <text>Phosphorylated by PKA and BARK upon agonist stimulation, which mediates homologous desensitization of the receptor. PKA-mediated phosphorylation seems to facilitate phosphorylation by BARK.</text>
</comment>
<comment type="PTM">
    <text evidence="1">Phosphorylation of Tyr-141 is induced by insulin and leads to supersensitization of the receptor.</text>
</comment>
<comment type="PTM">
    <text evidence="1">Polyubiquitinated. Agonist-induced ubiquitination leads to sort internalized receptors to the lysosomes for degradation. Deubiquitination by USP20 and USP33, leads to ADRB2 recycling and resensitization after prolonged agonist stimulation. USP20 and USP33 are constitutively associated and are dissociated immediately after agonist stimulation. Ubiquitination by the VHL-E3 ligase complex is oxygen-dependent (By similarity).</text>
</comment>
<comment type="PTM">
    <text evidence="1">Hydroxylation by EGLN3 occurs only under normoxia and increases the interaction with VHL and the subsequent ubiquitination and degradation of ADRB2.</text>
</comment>
<comment type="PTM">
    <text evidence="2">Palmitoylated. Mainly palmitoylated at Cys-341. Palmitoylation may reduce accessibility of phosphorylation sites by anchoring the receptor to the plasma membrane. Agonist stimulation promotes depalmitoylation and further allows Ser-345 and Ser-346 phosphorylation. Also undergoes transient, ligand-induced palmitoylation at Cys-265 probably by ZDHHC9, ZDHHC14 and ZDHHC18 within the Golgi. Palmitoylation at Cys-265 requires phosphorylation by PKA and receptor internalization and stabilizes the receptor. Could be depalmitoylated by LYPLA1 at the plasma membrane.</text>
</comment>
<comment type="similarity">
    <text evidence="4">Belongs to the G-protein coupled receptor 1 family. Adrenergic receptor subfamily. ADRB2 sub-subfamily.</text>
</comment>
<name>ADRB2_MACMU</name>
<keyword id="KW-1003">Cell membrane</keyword>
<keyword id="KW-1015">Disulfide bond</keyword>
<keyword id="KW-0967">Endosome</keyword>
<keyword id="KW-0297">G-protein coupled receptor</keyword>
<keyword id="KW-0325">Glycoprotein</keyword>
<keyword id="KW-0333">Golgi apparatus</keyword>
<keyword id="KW-0379">Hydroxylation</keyword>
<keyword id="KW-0449">Lipoprotein</keyword>
<keyword id="KW-0472">Membrane</keyword>
<keyword id="KW-0564">Palmitate</keyword>
<keyword id="KW-0597">Phosphoprotein</keyword>
<keyword id="KW-0675">Receptor</keyword>
<keyword id="KW-1185">Reference proteome</keyword>
<keyword id="KW-0807">Transducer</keyword>
<keyword id="KW-0812">Transmembrane</keyword>
<keyword id="KW-1133">Transmembrane helix</keyword>
<keyword id="KW-0832">Ubl conjugation</keyword>
<organism>
    <name type="scientific">Macaca mulatta</name>
    <name type="common">Rhesus macaque</name>
    <dbReference type="NCBI Taxonomy" id="9544"/>
    <lineage>
        <taxon>Eukaryota</taxon>
        <taxon>Metazoa</taxon>
        <taxon>Chordata</taxon>
        <taxon>Craniata</taxon>
        <taxon>Vertebrata</taxon>
        <taxon>Euteleostomi</taxon>
        <taxon>Mammalia</taxon>
        <taxon>Eutheria</taxon>
        <taxon>Euarchontoglires</taxon>
        <taxon>Primates</taxon>
        <taxon>Haplorrhini</taxon>
        <taxon>Catarrhini</taxon>
        <taxon>Cercopithecidae</taxon>
        <taxon>Cercopithecinae</taxon>
        <taxon>Macaca</taxon>
    </lineage>
</organism>
<protein>
    <recommendedName>
        <fullName>Beta-2 adrenergic receptor</fullName>
    </recommendedName>
    <alternativeName>
        <fullName>Beta-2 adrenoreceptor</fullName>
        <shortName>Beta-2 adrenoceptor</shortName>
    </alternativeName>
</protein>